<feature type="chain" id="PRO_1000061058" description="Adenosine deaminase">
    <location>
        <begin position="1"/>
        <end position="334"/>
    </location>
</feature>
<feature type="active site" description="Proton donor" evidence="1">
    <location>
        <position position="200"/>
    </location>
</feature>
<feature type="binding site" evidence="1">
    <location>
        <position position="12"/>
    </location>
    <ligand>
        <name>Zn(2+)</name>
        <dbReference type="ChEBI" id="CHEBI:29105"/>
        <note>catalytic</note>
    </ligand>
</feature>
<feature type="binding site" evidence="1">
    <location>
        <position position="14"/>
    </location>
    <ligand>
        <name>substrate</name>
    </ligand>
</feature>
<feature type="binding site" evidence="1">
    <location>
        <position position="14"/>
    </location>
    <ligand>
        <name>Zn(2+)</name>
        <dbReference type="ChEBI" id="CHEBI:29105"/>
        <note>catalytic</note>
    </ligand>
</feature>
<feature type="binding site" evidence="1">
    <location>
        <position position="16"/>
    </location>
    <ligand>
        <name>substrate</name>
    </ligand>
</feature>
<feature type="binding site" evidence="1">
    <location>
        <position position="170"/>
    </location>
    <ligand>
        <name>substrate</name>
    </ligand>
</feature>
<feature type="binding site" evidence="1">
    <location>
        <position position="197"/>
    </location>
    <ligand>
        <name>Zn(2+)</name>
        <dbReference type="ChEBI" id="CHEBI:29105"/>
        <note>catalytic</note>
    </ligand>
</feature>
<feature type="binding site" evidence="1">
    <location>
        <position position="278"/>
    </location>
    <ligand>
        <name>Zn(2+)</name>
        <dbReference type="ChEBI" id="CHEBI:29105"/>
        <note>catalytic</note>
    </ligand>
</feature>
<feature type="binding site" evidence="1">
    <location>
        <position position="279"/>
    </location>
    <ligand>
        <name>substrate</name>
    </ligand>
</feature>
<feature type="site" description="Important for catalytic activity" evidence="1">
    <location>
        <position position="221"/>
    </location>
</feature>
<evidence type="ECO:0000255" key="1">
    <source>
        <dbReference type="HAMAP-Rule" id="MF_00540"/>
    </source>
</evidence>
<reference key="1">
    <citation type="journal article" date="2007" name="PLoS Genet.">
        <title>The complete genome sequence of Yersinia pseudotuberculosis IP31758, the causative agent of Far East scarlet-like fever.</title>
        <authorList>
            <person name="Eppinger M."/>
            <person name="Rosovitz M.J."/>
            <person name="Fricke W.F."/>
            <person name="Rasko D.A."/>
            <person name="Kokorina G."/>
            <person name="Fayolle C."/>
            <person name="Lindler L.E."/>
            <person name="Carniel E."/>
            <person name="Ravel J."/>
        </authorList>
    </citation>
    <scope>NUCLEOTIDE SEQUENCE [LARGE SCALE GENOMIC DNA]</scope>
    <source>
        <strain>IP 31758</strain>
    </source>
</reference>
<dbReference type="EC" id="3.5.4.4" evidence="1"/>
<dbReference type="EMBL" id="CP000720">
    <property type="protein sequence ID" value="ABS48217.1"/>
    <property type="molecule type" value="Genomic_DNA"/>
</dbReference>
<dbReference type="RefSeq" id="WP_012105088.1">
    <property type="nucleotide sequence ID" value="NC_009708.1"/>
</dbReference>
<dbReference type="SMR" id="A7FHX5"/>
<dbReference type="KEGG" id="ypi:YpsIP31758_1878"/>
<dbReference type="HOGENOM" id="CLU_039228_0_2_6"/>
<dbReference type="Proteomes" id="UP000002412">
    <property type="component" value="Chromosome"/>
</dbReference>
<dbReference type="GO" id="GO:0005829">
    <property type="term" value="C:cytosol"/>
    <property type="evidence" value="ECO:0007669"/>
    <property type="project" value="TreeGrafter"/>
</dbReference>
<dbReference type="GO" id="GO:0046936">
    <property type="term" value="F:2'-deoxyadenosine deaminase activity"/>
    <property type="evidence" value="ECO:0007669"/>
    <property type="project" value="RHEA"/>
</dbReference>
<dbReference type="GO" id="GO:0004000">
    <property type="term" value="F:adenosine deaminase activity"/>
    <property type="evidence" value="ECO:0007669"/>
    <property type="project" value="UniProtKB-UniRule"/>
</dbReference>
<dbReference type="GO" id="GO:0008270">
    <property type="term" value="F:zinc ion binding"/>
    <property type="evidence" value="ECO:0007669"/>
    <property type="project" value="UniProtKB-UniRule"/>
</dbReference>
<dbReference type="GO" id="GO:0006154">
    <property type="term" value="P:adenosine catabolic process"/>
    <property type="evidence" value="ECO:0007669"/>
    <property type="project" value="TreeGrafter"/>
</dbReference>
<dbReference type="GO" id="GO:0043103">
    <property type="term" value="P:hypoxanthine salvage"/>
    <property type="evidence" value="ECO:0007669"/>
    <property type="project" value="TreeGrafter"/>
</dbReference>
<dbReference type="GO" id="GO:0046103">
    <property type="term" value="P:inosine biosynthetic process"/>
    <property type="evidence" value="ECO:0007669"/>
    <property type="project" value="TreeGrafter"/>
</dbReference>
<dbReference type="GO" id="GO:0009117">
    <property type="term" value="P:nucleotide metabolic process"/>
    <property type="evidence" value="ECO:0007669"/>
    <property type="project" value="UniProtKB-KW"/>
</dbReference>
<dbReference type="GO" id="GO:0009168">
    <property type="term" value="P:purine ribonucleoside monophosphate biosynthetic process"/>
    <property type="evidence" value="ECO:0007669"/>
    <property type="project" value="UniProtKB-UniRule"/>
</dbReference>
<dbReference type="CDD" id="cd01320">
    <property type="entry name" value="ADA"/>
    <property type="match status" value="1"/>
</dbReference>
<dbReference type="FunFam" id="3.20.20.140:FF:000009">
    <property type="entry name" value="Adenosine deaminase"/>
    <property type="match status" value="1"/>
</dbReference>
<dbReference type="Gene3D" id="3.20.20.140">
    <property type="entry name" value="Metal-dependent hydrolases"/>
    <property type="match status" value="1"/>
</dbReference>
<dbReference type="HAMAP" id="MF_00540">
    <property type="entry name" value="A_deaminase"/>
    <property type="match status" value="1"/>
</dbReference>
<dbReference type="InterPro" id="IPR006650">
    <property type="entry name" value="A/AMP_deam_AS"/>
</dbReference>
<dbReference type="InterPro" id="IPR028893">
    <property type="entry name" value="A_deaminase"/>
</dbReference>
<dbReference type="InterPro" id="IPR001365">
    <property type="entry name" value="A_deaminase_dom"/>
</dbReference>
<dbReference type="InterPro" id="IPR006330">
    <property type="entry name" value="Ado/ade_deaminase"/>
</dbReference>
<dbReference type="InterPro" id="IPR032466">
    <property type="entry name" value="Metal_Hydrolase"/>
</dbReference>
<dbReference type="NCBIfam" id="TIGR01430">
    <property type="entry name" value="aden_deam"/>
    <property type="match status" value="1"/>
</dbReference>
<dbReference type="NCBIfam" id="NF006846">
    <property type="entry name" value="PRK09358.1-1"/>
    <property type="match status" value="1"/>
</dbReference>
<dbReference type="PANTHER" id="PTHR11409">
    <property type="entry name" value="ADENOSINE DEAMINASE"/>
    <property type="match status" value="1"/>
</dbReference>
<dbReference type="PANTHER" id="PTHR11409:SF43">
    <property type="entry name" value="ADENOSINE DEAMINASE"/>
    <property type="match status" value="1"/>
</dbReference>
<dbReference type="Pfam" id="PF00962">
    <property type="entry name" value="A_deaminase"/>
    <property type="match status" value="1"/>
</dbReference>
<dbReference type="SUPFAM" id="SSF51556">
    <property type="entry name" value="Metallo-dependent hydrolases"/>
    <property type="match status" value="1"/>
</dbReference>
<dbReference type="PROSITE" id="PS00485">
    <property type="entry name" value="A_DEAMINASE"/>
    <property type="match status" value="1"/>
</dbReference>
<name>ADD_YERP3</name>
<sequence length="334" mass="36673">MIDPRLPLTDIHRHLDGNIRAQTILDLGQQFNLNLPANELDTLRPHVQITKTEPDLVSFLQKLDWGVAVLGSLDACRRVAYENVEDAAHAGLHYAELRFSPFYMAMKHQLPITGVVEAVIDGIASGCRDFNIDIRLIGILSRTFGEQACLQELDSLLAHREGITALDLAGDELGFPGSLFRRHFNRARDAGLRITVHAGEAAGPESIWQAIRELGAERIGHGVKAVEDRKLMDYLAEHKIGIESCLTSNIQTSTVVSLATHPLATFLRHGIVASINTDDPAVQGIEIAHEYLVAAPAAGLTPHEIRQAQANGLEMAFISEQEKQALRDKVFPIS</sequence>
<keyword id="KW-0378">Hydrolase</keyword>
<keyword id="KW-0479">Metal-binding</keyword>
<keyword id="KW-0546">Nucleotide metabolism</keyword>
<keyword id="KW-0862">Zinc</keyword>
<protein>
    <recommendedName>
        <fullName evidence="1">Adenosine deaminase</fullName>
        <ecNumber evidence="1">3.5.4.4</ecNumber>
    </recommendedName>
    <alternativeName>
        <fullName evidence="1">Adenosine aminohydrolase</fullName>
    </alternativeName>
</protein>
<accession>A7FHX5</accession>
<gene>
    <name evidence="1" type="primary">add</name>
    <name type="ordered locus">YpsIP31758_1878</name>
</gene>
<organism>
    <name type="scientific">Yersinia pseudotuberculosis serotype O:1b (strain IP 31758)</name>
    <dbReference type="NCBI Taxonomy" id="349747"/>
    <lineage>
        <taxon>Bacteria</taxon>
        <taxon>Pseudomonadati</taxon>
        <taxon>Pseudomonadota</taxon>
        <taxon>Gammaproteobacteria</taxon>
        <taxon>Enterobacterales</taxon>
        <taxon>Yersiniaceae</taxon>
        <taxon>Yersinia</taxon>
    </lineage>
</organism>
<proteinExistence type="inferred from homology"/>
<comment type="function">
    <text evidence="1">Catalyzes the hydrolytic deamination of adenosine and 2-deoxyadenosine.</text>
</comment>
<comment type="catalytic activity">
    <reaction evidence="1">
        <text>adenosine + H2O + H(+) = inosine + NH4(+)</text>
        <dbReference type="Rhea" id="RHEA:24408"/>
        <dbReference type="ChEBI" id="CHEBI:15377"/>
        <dbReference type="ChEBI" id="CHEBI:15378"/>
        <dbReference type="ChEBI" id="CHEBI:16335"/>
        <dbReference type="ChEBI" id="CHEBI:17596"/>
        <dbReference type="ChEBI" id="CHEBI:28938"/>
        <dbReference type="EC" id="3.5.4.4"/>
    </reaction>
    <physiologicalReaction direction="left-to-right" evidence="1">
        <dbReference type="Rhea" id="RHEA:24409"/>
    </physiologicalReaction>
</comment>
<comment type="catalytic activity">
    <reaction evidence="1">
        <text>2'-deoxyadenosine + H2O + H(+) = 2'-deoxyinosine + NH4(+)</text>
        <dbReference type="Rhea" id="RHEA:28190"/>
        <dbReference type="ChEBI" id="CHEBI:15377"/>
        <dbReference type="ChEBI" id="CHEBI:15378"/>
        <dbReference type="ChEBI" id="CHEBI:17256"/>
        <dbReference type="ChEBI" id="CHEBI:28938"/>
        <dbReference type="ChEBI" id="CHEBI:28997"/>
        <dbReference type="EC" id="3.5.4.4"/>
    </reaction>
    <physiologicalReaction direction="left-to-right" evidence="1">
        <dbReference type="Rhea" id="RHEA:28191"/>
    </physiologicalReaction>
</comment>
<comment type="cofactor">
    <cofactor evidence="1">
        <name>Zn(2+)</name>
        <dbReference type="ChEBI" id="CHEBI:29105"/>
    </cofactor>
    <text evidence="1">Binds 1 zinc ion per subunit.</text>
</comment>
<comment type="similarity">
    <text evidence="1">Belongs to the metallo-dependent hydrolases superfamily. Adenosine and AMP deaminases family. Adenosine deaminase subfamily.</text>
</comment>